<organism>
    <name type="scientific">Enterococcus gallinarum</name>
    <dbReference type="NCBI Taxonomy" id="1353"/>
    <lineage>
        <taxon>Bacteria</taxon>
        <taxon>Bacillati</taxon>
        <taxon>Bacillota</taxon>
        <taxon>Bacilli</taxon>
        <taxon>Lactobacillales</taxon>
        <taxon>Enterococcaceae</taxon>
        <taxon>Enterococcus</taxon>
    </lineage>
</organism>
<proteinExistence type="evidence at protein level"/>
<evidence type="ECO:0000255" key="1"/>
<evidence type="ECO:0000255" key="2">
    <source>
        <dbReference type="HAMAP-Rule" id="MF_01201"/>
    </source>
</evidence>
<evidence type="ECO:0000269" key="3">
    <source>
    </source>
</evidence>
<evidence type="ECO:0000269" key="4">
    <source>
    </source>
</evidence>
<evidence type="ECO:0000269" key="5">
    <source>
    </source>
</evidence>
<evidence type="ECO:0000269" key="6">
    <source>
    </source>
</evidence>
<evidence type="ECO:0000303" key="7">
    <source>
    </source>
</evidence>
<evidence type="ECO:0000303" key="8">
    <source>
    </source>
</evidence>
<evidence type="ECO:0000305" key="9"/>
<evidence type="ECO:0000305" key="10">
    <source>
    </source>
</evidence>
<evidence type="ECO:0000305" key="11">
    <source>
    </source>
</evidence>
<accession>Q9X3P3</accession>
<feature type="chain" id="PRO_0000114606" description="Serine/alanine racemase">
    <location>
        <begin position="1"/>
        <end position="698"/>
    </location>
</feature>
<feature type="topological domain" description="Cytoplasmic" evidence="9">
    <location>
        <begin position="1"/>
        <end position="10"/>
    </location>
</feature>
<feature type="transmembrane region" description="Helical" evidence="1">
    <location>
        <begin position="11"/>
        <end position="31"/>
    </location>
</feature>
<feature type="topological domain" description="Extracellular" evidence="9">
    <location>
        <begin position="32"/>
        <end position="42"/>
    </location>
</feature>
<feature type="transmembrane region" description="Helical" evidence="1">
    <location>
        <begin position="43"/>
        <end position="63"/>
    </location>
</feature>
<feature type="topological domain" description="Cytoplasmic" evidence="9">
    <location>
        <begin position="64"/>
        <end position="81"/>
    </location>
</feature>
<feature type="transmembrane region" description="Helical" evidence="1">
    <location>
        <begin position="82"/>
        <end position="102"/>
    </location>
</feature>
<feature type="topological domain" description="Extracellular" evidence="9">
    <location>
        <begin position="103"/>
        <end position="121"/>
    </location>
</feature>
<feature type="transmembrane region" description="Helical" evidence="1">
    <location>
        <begin position="122"/>
        <end position="142"/>
    </location>
</feature>
<feature type="topological domain" description="Cytoplasmic" evidence="9">
    <location>
        <begin position="143"/>
        <end position="147"/>
    </location>
</feature>
<feature type="transmembrane region" description="Helical" evidence="1">
    <location>
        <begin position="148"/>
        <end position="168"/>
    </location>
</feature>
<feature type="topological domain" description="Extracellular" evidence="9">
    <location>
        <begin position="169"/>
        <end position="183"/>
    </location>
</feature>
<feature type="transmembrane region" description="Helical" evidence="1">
    <location>
        <begin position="184"/>
        <end position="204"/>
    </location>
</feature>
<feature type="topological domain" description="Cytoplasmic" evidence="9">
    <location>
        <begin position="205"/>
        <end position="216"/>
    </location>
</feature>
<feature type="transmembrane region" description="Helical" evidence="1">
    <location>
        <begin position="217"/>
        <end position="237"/>
    </location>
</feature>
<feature type="topological domain" description="Extracellular" evidence="9">
    <location>
        <begin position="238"/>
        <end position="244"/>
    </location>
</feature>
<feature type="transmembrane region" description="Helical" evidence="1">
    <location>
        <begin position="245"/>
        <end position="265"/>
    </location>
</feature>
<feature type="topological domain" description="Cytoplasmic" evidence="9">
    <location>
        <begin position="266"/>
        <end position="274"/>
    </location>
</feature>
<feature type="transmembrane region" description="Helical" evidence="1">
    <location>
        <begin position="275"/>
        <end position="295"/>
    </location>
</feature>
<feature type="topological domain" description="Extracellular" evidence="9">
    <location>
        <begin position="296"/>
        <end position="301"/>
    </location>
</feature>
<feature type="transmembrane region" description="Helical" evidence="1">
    <location>
        <begin position="302"/>
        <end position="322"/>
    </location>
</feature>
<feature type="topological domain" description="Cytoplasmic" evidence="9">
    <location>
        <begin position="323"/>
        <end position="698"/>
    </location>
</feature>
<feature type="region of interest" description="Racemase" evidence="9">
    <location>
        <begin position="332"/>
        <end position="698"/>
    </location>
</feature>
<feature type="active site" description="Proton acceptor" evidence="2">
    <location>
        <position position="371"/>
    </location>
</feature>
<feature type="active site" description="Proton acceptor" evidence="2">
    <location>
        <position position="597"/>
    </location>
</feature>
<feature type="binding site" evidence="2">
    <location>
        <position position="465"/>
    </location>
    <ligand>
        <name>substrate</name>
    </ligand>
</feature>
<feature type="binding site" evidence="2">
    <location>
        <position position="646"/>
    </location>
    <ligand>
        <name>substrate</name>
    </ligand>
</feature>
<feature type="modified residue" description="N6-(pyridoxal phosphate)lysine" evidence="2">
    <location>
        <position position="371"/>
    </location>
</feature>
<gene>
    <name evidence="7 8" type="primary">vanT</name>
    <name evidence="9" type="synonym">vanTC</name>
</gene>
<name>VANTC_ENTGA</name>
<protein>
    <recommendedName>
        <fullName evidence="11">Serine/alanine racemase</fullName>
        <ecNumber evidence="3 5">5.1.1.-</ecNumber>
        <ecNumber evidence="5">5.1.1.1</ecNumber>
    </recommendedName>
    <alternativeName>
        <fullName>Vancomycin C-type resistance protein VanT</fullName>
    </alternativeName>
</protein>
<keyword id="KW-0046">Antibiotic resistance</keyword>
<keyword id="KW-1003">Cell membrane</keyword>
<keyword id="KW-0133">Cell shape</keyword>
<keyword id="KW-0961">Cell wall biogenesis/degradation</keyword>
<keyword id="KW-0903">Direct protein sequencing</keyword>
<keyword id="KW-0413">Isomerase</keyword>
<keyword id="KW-0472">Membrane</keyword>
<keyword id="KW-0573">Peptidoglycan synthesis</keyword>
<keyword id="KW-0663">Pyridoxal phosphate</keyword>
<keyword id="KW-0812">Transmembrane</keyword>
<keyword id="KW-1133">Transmembrane helix</keyword>
<dbReference type="EC" id="5.1.1.-" evidence="3 5"/>
<dbReference type="EC" id="5.1.1.1" evidence="5"/>
<dbReference type="EMBL" id="AF162694">
    <property type="protein sequence ID" value="AAD22403.1"/>
    <property type="molecule type" value="Genomic_DNA"/>
</dbReference>
<dbReference type="RefSeq" id="WP_003126777.1">
    <property type="nucleotide sequence ID" value="NG_048454.1"/>
</dbReference>
<dbReference type="SMR" id="Q9X3P3"/>
<dbReference type="CARD" id="ARO:3002970">
    <property type="molecule name" value="vanT_in_vanC_cl"/>
    <property type="mechanism identifier" value="ARO:0001001"/>
    <property type="mechanism name" value="antibiotic target alteration"/>
</dbReference>
<dbReference type="PATRIC" id="fig|1353.6.peg.67"/>
<dbReference type="BioCyc" id="MetaCyc:MONOMER-15476"/>
<dbReference type="UniPathway" id="UPA00042">
    <property type="reaction ID" value="UER00497"/>
</dbReference>
<dbReference type="GO" id="GO:0005829">
    <property type="term" value="C:cytosol"/>
    <property type="evidence" value="ECO:0007669"/>
    <property type="project" value="TreeGrafter"/>
</dbReference>
<dbReference type="GO" id="GO:0005886">
    <property type="term" value="C:plasma membrane"/>
    <property type="evidence" value="ECO:0007669"/>
    <property type="project" value="UniProtKB-SubCell"/>
</dbReference>
<dbReference type="GO" id="GO:0016747">
    <property type="term" value="F:acyltransferase activity, transferring groups other than amino-acyl groups"/>
    <property type="evidence" value="ECO:0007669"/>
    <property type="project" value="InterPro"/>
</dbReference>
<dbReference type="GO" id="GO:0008784">
    <property type="term" value="F:alanine racemase activity"/>
    <property type="evidence" value="ECO:0007669"/>
    <property type="project" value="UniProtKB-UniRule"/>
</dbReference>
<dbReference type="GO" id="GO:0030170">
    <property type="term" value="F:pyridoxal phosphate binding"/>
    <property type="evidence" value="ECO:0007669"/>
    <property type="project" value="UniProtKB-UniRule"/>
</dbReference>
<dbReference type="GO" id="GO:0030378">
    <property type="term" value="F:serine racemase activity"/>
    <property type="evidence" value="ECO:0007669"/>
    <property type="project" value="RHEA"/>
</dbReference>
<dbReference type="GO" id="GO:0071555">
    <property type="term" value="P:cell wall organization"/>
    <property type="evidence" value="ECO:0007669"/>
    <property type="project" value="UniProtKB-KW"/>
</dbReference>
<dbReference type="GO" id="GO:0030632">
    <property type="term" value="P:D-alanine biosynthetic process"/>
    <property type="evidence" value="ECO:0007669"/>
    <property type="project" value="UniProtKB-UniRule"/>
</dbReference>
<dbReference type="GO" id="GO:0009252">
    <property type="term" value="P:peptidoglycan biosynthetic process"/>
    <property type="evidence" value="ECO:0007669"/>
    <property type="project" value="UniProtKB-KW"/>
</dbReference>
<dbReference type="GO" id="GO:0008360">
    <property type="term" value="P:regulation of cell shape"/>
    <property type="evidence" value="ECO:0007669"/>
    <property type="project" value="UniProtKB-KW"/>
</dbReference>
<dbReference type="GO" id="GO:0046677">
    <property type="term" value="P:response to antibiotic"/>
    <property type="evidence" value="ECO:0007669"/>
    <property type="project" value="UniProtKB-KW"/>
</dbReference>
<dbReference type="CDD" id="cd06825">
    <property type="entry name" value="PLPDE_III_VanT"/>
    <property type="match status" value="1"/>
</dbReference>
<dbReference type="FunFam" id="3.20.20.10:FF:000002">
    <property type="entry name" value="Alanine racemase"/>
    <property type="match status" value="1"/>
</dbReference>
<dbReference type="Gene3D" id="3.20.20.10">
    <property type="entry name" value="Alanine racemase"/>
    <property type="match status" value="1"/>
</dbReference>
<dbReference type="Gene3D" id="2.40.37.10">
    <property type="entry name" value="Lyase, Ornithine Decarboxylase, Chain A, domain 1"/>
    <property type="match status" value="1"/>
</dbReference>
<dbReference type="HAMAP" id="MF_01201">
    <property type="entry name" value="Ala_racemase"/>
    <property type="match status" value="1"/>
</dbReference>
<dbReference type="InterPro" id="IPR002656">
    <property type="entry name" value="Acyl_transf_3_dom"/>
</dbReference>
<dbReference type="InterPro" id="IPR000821">
    <property type="entry name" value="Ala_racemase"/>
</dbReference>
<dbReference type="InterPro" id="IPR009006">
    <property type="entry name" value="Ala_racemase/Decarboxylase_C"/>
</dbReference>
<dbReference type="InterPro" id="IPR011079">
    <property type="entry name" value="Ala_racemase_C"/>
</dbReference>
<dbReference type="InterPro" id="IPR001608">
    <property type="entry name" value="Ala_racemase_N"/>
</dbReference>
<dbReference type="InterPro" id="IPR020622">
    <property type="entry name" value="Ala_racemase_pyridoxalP-BS"/>
</dbReference>
<dbReference type="InterPro" id="IPR029066">
    <property type="entry name" value="PLP-binding_barrel"/>
</dbReference>
<dbReference type="InterPro" id="IPR011248">
    <property type="entry name" value="Serine/alanine_racemase"/>
</dbReference>
<dbReference type="NCBIfam" id="TIGR00492">
    <property type="entry name" value="alr"/>
    <property type="match status" value="1"/>
</dbReference>
<dbReference type="NCBIfam" id="NF033132">
    <property type="entry name" value="vanT-CELN"/>
    <property type="match status" value="1"/>
</dbReference>
<dbReference type="PANTHER" id="PTHR30511">
    <property type="entry name" value="ALANINE RACEMASE"/>
    <property type="match status" value="1"/>
</dbReference>
<dbReference type="PANTHER" id="PTHR30511:SF0">
    <property type="entry name" value="ALANINE RACEMASE, CATABOLIC-RELATED"/>
    <property type="match status" value="1"/>
</dbReference>
<dbReference type="Pfam" id="PF01757">
    <property type="entry name" value="Acyl_transf_3"/>
    <property type="match status" value="1"/>
</dbReference>
<dbReference type="Pfam" id="PF00842">
    <property type="entry name" value="Ala_racemase_C"/>
    <property type="match status" value="1"/>
</dbReference>
<dbReference type="Pfam" id="PF01168">
    <property type="entry name" value="Ala_racemase_N"/>
    <property type="match status" value="1"/>
</dbReference>
<dbReference type="PIRSF" id="PIRSF036464">
    <property type="entry name" value="Ser_ala_racem"/>
    <property type="match status" value="1"/>
</dbReference>
<dbReference type="PRINTS" id="PR00992">
    <property type="entry name" value="ALARACEMASE"/>
</dbReference>
<dbReference type="SMART" id="SM01005">
    <property type="entry name" value="Ala_racemase_C"/>
    <property type="match status" value="1"/>
</dbReference>
<dbReference type="SUPFAM" id="SSF50621">
    <property type="entry name" value="Alanine racemase C-terminal domain-like"/>
    <property type="match status" value="1"/>
</dbReference>
<dbReference type="SUPFAM" id="SSF51419">
    <property type="entry name" value="PLP-binding barrel"/>
    <property type="match status" value="1"/>
</dbReference>
<dbReference type="PROSITE" id="PS00395">
    <property type="entry name" value="ALANINE_RACEMASE"/>
    <property type="match status" value="1"/>
</dbReference>
<reference key="1">
    <citation type="journal article" date="1999" name="Mol. Microbiol.">
        <title>Characterization and modelling of VanT: a novel, membrane-bound, serine racemase from vancomycin-resistant Enterococcus gallinarum BM4174.</title>
        <authorList>
            <person name="Arias C.A."/>
            <person name="Martin-Martinez M."/>
            <person name="Blundell T.L."/>
            <person name="Arthur M."/>
            <person name="Courvalin P."/>
            <person name="Reynolds P.E."/>
        </authorList>
    </citation>
    <scope>NUCLEOTIDE SEQUENCE [GENOMIC DNA]</scope>
    <scope>FUNCTION</scope>
    <scope>CATALYTIC ACTIVITY</scope>
    <scope>SUBCELLULAR LOCATION</scope>
    <scope>SUBUNIT</scope>
    <source>
        <strain>BM4174</strain>
    </source>
</reference>
<reference key="2">
    <citation type="journal article" date="2000" name="Microbiology">
        <title>Serine and alanine racemase activities of VanT: a protein necessary for vancomycin resistance in Enterococcus gallinarum BM4174.</title>
        <authorList>
            <person name="Arias C.A."/>
            <person name="Weisner J."/>
            <person name="Blackburn J.M."/>
            <person name="Reynolds P.E."/>
        </authorList>
    </citation>
    <scope>PROTEIN SEQUENCE OF N-TERMINUS</scope>
    <scope>FUNCTION</scope>
    <scope>CATALYTIC ACTIVITY</scope>
    <scope>SUBCELLULAR LOCATION</scope>
    <scope>DOMAIN</scope>
    <source>
        <strain>BM4174</strain>
    </source>
</reference>
<reference key="3">
    <citation type="journal article" date="2000" name="Antimicrob. Agents Chemother.">
        <title>vanC cluster of vancomycin-resistant Enterococcus gallinarum BM4174.</title>
        <authorList>
            <person name="Arias C.A."/>
            <person name="Courvalin P."/>
            <person name="Reynolds P.E."/>
        </authorList>
    </citation>
    <scope>FUNCTION</scope>
</reference>
<reference evidence="9" key="4">
    <citation type="journal article" date="2005" name="Antimicrob. Agents Chemother.">
        <title>Transcriptional analysis of the vanC cluster from Enterococcus gallinarum strains with constitutive and inducible vancomycin resistance.</title>
        <authorList>
            <person name="Panesso D."/>
            <person name="Abadia-Patino L."/>
            <person name="Vanegas N."/>
            <person name="Reynolds P.E."/>
            <person name="Courvalin P."/>
            <person name="Arias C.A."/>
        </authorList>
    </citation>
    <scope>FUNCTION</scope>
    <scope>INDUCTION</scope>
</reference>
<comment type="function">
    <text evidence="3 4 5 6">Catalyzes the interconversion of L-serine and D-serine, and L-alanine and D-alanine (PubMed:10209740, PubMed:10878136). L-alanine is racemized at a rate that is 14% of that of L-serine (PubMed:10878136). Together with VanC/VanC1 and VanXYC, required for vancomycin resistance in E.gallinarum strain BM4174 (PubMed:10817725, PubMed:15728903).</text>
</comment>
<comment type="catalytic activity">
    <reaction evidence="5">
        <text>L-alanine = D-alanine</text>
        <dbReference type="Rhea" id="RHEA:20249"/>
        <dbReference type="ChEBI" id="CHEBI:57416"/>
        <dbReference type="ChEBI" id="CHEBI:57972"/>
        <dbReference type="EC" id="5.1.1.1"/>
    </reaction>
</comment>
<comment type="catalytic activity">
    <reaction evidence="3 5">
        <text>L-serine = D-serine</text>
        <dbReference type="Rhea" id="RHEA:10980"/>
        <dbReference type="ChEBI" id="CHEBI:33384"/>
        <dbReference type="ChEBI" id="CHEBI:35247"/>
    </reaction>
</comment>
<comment type="cofactor">
    <cofactor evidence="2">
        <name>pyridoxal 5'-phosphate</name>
        <dbReference type="ChEBI" id="CHEBI:597326"/>
    </cofactor>
</comment>
<comment type="pathway">
    <text evidence="2">Amino-acid biosynthesis; D-alanine biosynthesis; D-alanine from L-alanine: step 1/1.</text>
</comment>
<comment type="subunit">
    <text evidence="10">Homodimer.</text>
</comment>
<comment type="subcellular location">
    <subcellularLocation>
        <location evidence="3 5">Cell membrane</location>
        <topology evidence="3 5">Multi-pass membrane protein</topology>
    </subcellularLocation>
</comment>
<comment type="induction">
    <text evidence="6">Expression regulated by upstream promoter elements (PubMed:15728903). Part of the probable VanC-type operon associated with vancomycin resistance (PubMed:15728903).</text>
</comment>
<comment type="domain">
    <text evidence="5">The cytoplasmic C-terminal domain is responsible for the racemase activity.</text>
</comment>
<comment type="similarity">
    <text evidence="9">In the N-terminal section; belongs to the acyltransferase 3 family.</text>
</comment>
<comment type="similarity">
    <text evidence="9">In the C-terminal section; belongs to the alanine racemase family.</text>
</comment>
<sequence>MKNKGIDQFRVIAAMMVVAIHCLPLHYLWPEGDILITLTIFRVAVPFFFMISGYYVFAELAVANSYPSRQRVFNFIKKQLKVYLLATLMFLPLALYSQTIGFDLPVGTLVQVLLVNGILYHLWYFPALITGSLLLTSLLIHVSFKKVFWLAAGLYLIGLGGDSWFGLIQQTPIEPFYTAVFHLLDGTRNGIFFTPLFLCLGVLVRKQSEKRSLSKTALFFLISLIGLLIESAYLHGFSIPKHDSMYLFLPVVLFFLFPLILRWHPHRTWKHPGQLSLWLYLLHPYTIAGTHFLSQKISILQNNLINYLVVLILTIGFICLFLRQKHSWFRHKQTTPVKRAVKEFSKTALLHNLQEIQRIISPKTKVMAVVKADAYGCGAKEVAPVLEQAGIDFFAVATIDEGIRLRKNAVKSPILVLGYTSPKRIKELRRYSLTQSIISEGHAVALSQRKVAIDCHLAIDTGMHRLGVTPTIDSILSIFDLPFLTISGVYSHLGSADRLNPDSMIRTQKQIACFDQILLELDQRQISYGITHLQSSYGILNYPDLNYDYVRPGILLTGSLSDTNEPTKQRVSLQPILTLKAQLITKRVVAKGEAIGYGQTAVANQETTVGVVSIGYCDGLPRSLSNQEFCLSYRGQSLPQIGLICMDMLLIDLSHCPTIPIESEIEILTDWSDTAEQVQTITNELICRIGPRVSARIK</sequence>